<organism>
    <name type="scientific">Arabidopsis thaliana</name>
    <name type="common">Mouse-ear cress</name>
    <dbReference type="NCBI Taxonomy" id="3702"/>
    <lineage>
        <taxon>Eukaryota</taxon>
        <taxon>Viridiplantae</taxon>
        <taxon>Streptophyta</taxon>
        <taxon>Embryophyta</taxon>
        <taxon>Tracheophyta</taxon>
        <taxon>Spermatophyta</taxon>
        <taxon>Magnoliopsida</taxon>
        <taxon>eudicotyledons</taxon>
        <taxon>Gunneridae</taxon>
        <taxon>Pentapetalae</taxon>
        <taxon>rosids</taxon>
        <taxon>malvids</taxon>
        <taxon>Brassicales</taxon>
        <taxon>Brassicaceae</taxon>
        <taxon>Camelineae</taxon>
        <taxon>Arabidopsis</taxon>
    </lineage>
</organism>
<reference key="1">
    <citation type="journal article" date="2000" name="Nature">
        <title>Sequence and analysis of chromosome 1 of the plant Arabidopsis thaliana.</title>
        <authorList>
            <person name="Theologis A."/>
            <person name="Ecker J.R."/>
            <person name="Palm C.J."/>
            <person name="Federspiel N.A."/>
            <person name="Kaul S."/>
            <person name="White O."/>
            <person name="Alonso J."/>
            <person name="Altafi H."/>
            <person name="Araujo R."/>
            <person name="Bowman C.L."/>
            <person name="Brooks S.Y."/>
            <person name="Buehler E."/>
            <person name="Chan A."/>
            <person name="Chao Q."/>
            <person name="Chen H."/>
            <person name="Cheuk R.F."/>
            <person name="Chin C.W."/>
            <person name="Chung M.K."/>
            <person name="Conn L."/>
            <person name="Conway A.B."/>
            <person name="Conway A.R."/>
            <person name="Creasy T.H."/>
            <person name="Dewar K."/>
            <person name="Dunn P."/>
            <person name="Etgu P."/>
            <person name="Feldblyum T.V."/>
            <person name="Feng J.-D."/>
            <person name="Fong B."/>
            <person name="Fujii C.Y."/>
            <person name="Gill J.E."/>
            <person name="Goldsmith A.D."/>
            <person name="Haas B."/>
            <person name="Hansen N.F."/>
            <person name="Hughes B."/>
            <person name="Huizar L."/>
            <person name="Hunter J.L."/>
            <person name="Jenkins J."/>
            <person name="Johnson-Hopson C."/>
            <person name="Khan S."/>
            <person name="Khaykin E."/>
            <person name="Kim C.J."/>
            <person name="Koo H.L."/>
            <person name="Kremenetskaia I."/>
            <person name="Kurtz D.B."/>
            <person name="Kwan A."/>
            <person name="Lam B."/>
            <person name="Langin-Hooper S."/>
            <person name="Lee A."/>
            <person name="Lee J.M."/>
            <person name="Lenz C.A."/>
            <person name="Li J.H."/>
            <person name="Li Y.-P."/>
            <person name="Lin X."/>
            <person name="Liu S.X."/>
            <person name="Liu Z.A."/>
            <person name="Luros J.S."/>
            <person name="Maiti R."/>
            <person name="Marziali A."/>
            <person name="Militscher J."/>
            <person name="Miranda M."/>
            <person name="Nguyen M."/>
            <person name="Nierman W.C."/>
            <person name="Osborne B.I."/>
            <person name="Pai G."/>
            <person name="Peterson J."/>
            <person name="Pham P.K."/>
            <person name="Rizzo M."/>
            <person name="Rooney T."/>
            <person name="Rowley D."/>
            <person name="Sakano H."/>
            <person name="Salzberg S.L."/>
            <person name="Schwartz J.R."/>
            <person name="Shinn P."/>
            <person name="Southwick A.M."/>
            <person name="Sun H."/>
            <person name="Tallon L.J."/>
            <person name="Tambunga G."/>
            <person name="Toriumi M.J."/>
            <person name="Town C.D."/>
            <person name="Utterback T."/>
            <person name="Van Aken S."/>
            <person name="Vaysberg M."/>
            <person name="Vysotskaia V.S."/>
            <person name="Walker M."/>
            <person name="Wu D."/>
            <person name="Yu G."/>
            <person name="Fraser C.M."/>
            <person name="Venter J.C."/>
            <person name="Davis R.W."/>
        </authorList>
    </citation>
    <scope>NUCLEOTIDE SEQUENCE [LARGE SCALE GENOMIC DNA]</scope>
    <source>
        <strain>cv. Columbia</strain>
    </source>
</reference>
<reference key="2">
    <citation type="journal article" date="2017" name="Plant J.">
        <title>Araport11: a complete reannotation of the Arabidopsis thaliana reference genome.</title>
        <authorList>
            <person name="Cheng C.Y."/>
            <person name="Krishnakumar V."/>
            <person name="Chan A.P."/>
            <person name="Thibaud-Nissen F."/>
            <person name="Schobel S."/>
            <person name="Town C.D."/>
        </authorList>
    </citation>
    <scope>GENOME REANNOTATION</scope>
    <source>
        <strain>cv. Columbia</strain>
    </source>
</reference>
<gene>
    <name type="ordered locus">At1g47730</name>
    <name type="ORF">F16N3.1</name>
    <name type="ORF">T2E6.20</name>
</gene>
<feature type="chain" id="PRO_0000283318" description="Putative F-box protein At1g47730">
    <location>
        <begin position="1"/>
        <end position="391"/>
    </location>
</feature>
<feature type="domain" description="F-box" evidence="1">
    <location>
        <begin position="19"/>
        <end position="68"/>
    </location>
</feature>
<feature type="region of interest" description="Disordered" evidence="2">
    <location>
        <begin position="1"/>
        <end position="25"/>
    </location>
</feature>
<feature type="compositionally biased region" description="Basic and acidic residues" evidence="2">
    <location>
        <begin position="1"/>
        <end position="12"/>
    </location>
</feature>
<name>FB42_ARATH</name>
<protein>
    <recommendedName>
        <fullName>Putative F-box protein At1g47730</fullName>
    </recommendedName>
</protein>
<accession>Q9SXA0</accession>
<dbReference type="EMBL" id="AC007519">
    <property type="protein sequence ID" value="AAD46016.1"/>
    <property type="molecule type" value="Genomic_DNA"/>
</dbReference>
<dbReference type="EMBL" id="AC012463">
    <property type="protein sequence ID" value="AAF99793.1"/>
    <property type="molecule type" value="Genomic_DNA"/>
</dbReference>
<dbReference type="EMBL" id="CP002684">
    <property type="protein sequence ID" value="AEE32205.1"/>
    <property type="molecule type" value="Genomic_DNA"/>
</dbReference>
<dbReference type="PIR" id="A96518">
    <property type="entry name" value="A96518"/>
</dbReference>
<dbReference type="RefSeq" id="NP_175204.1">
    <property type="nucleotide sequence ID" value="NM_103666.1"/>
</dbReference>
<dbReference type="SMR" id="Q9SXA0"/>
<dbReference type="BioGRID" id="26409">
    <property type="interactions" value="4"/>
</dbReference>
<dbReference type="FunCoup" id="Q9SXA0">
    <property type="interactions" value="28"/>
</dbReference>
<dbReference type="IntAct" id="Q9SXA0">
    <property type="interactions" value="1"/>
</dbReference>
<dbReference type="STRING" id="3702.Q9SXA0"/>
<dbReference type="PaxDb" id="3702-AT1G47730.1"/>
<dbReference type="EnsemblPlants" id="AT1G47730.1">
    <property type="protein sequence ID" value="AT1G47730.1"/>
    <property type="gene ID" value="AT1G47730"/>
</dbReference>
<dbReference type="GeneID" id="841184"/>
<dbReference type="Gramene" id="AT1G47730.1">
    <property type="protein sequence ID" value="AT1G47730.1"/>
    <property type="gene ID" value="AT1G47730"/>
</dbReference>
<dbReference type="KEGG" id="ath:AT1G47730"/>
<dbReference type="Araport" id="AT1G47730"/>
<dbReference type="TAIR" id="AT1G47730"/>
<dbReference type="HOGENOM" id="CLU_027176_8_0_1"/>
<dbReference type="InParanoid" id="Q9SXA0"/>
<dbReference type="OMA" id="RSMWVLE"/>
<dbReference type="PhylomeDB" id="Q9SXA0"/>
<dbReference type="PRO" id="PR:Q9SXA0"/>
<dbReference type="Proteomes" id="UP000006548">
    <property type="component" value="Chromosome 1"/>
</dbReference>
<dbReference type="ExpressionAtlas" id="Q9SXA0">
    <property type="expression patterns" value="baseline and differential"/>
</dbReference>
<dbReference type="GO" id="GO:0005737">
    <property type="term" value="C:cytoplasm"/>
    <property type="evidence" value="ECO:0000314"/>
    <property type="project" value="TAIR"/>
</dbReference>
<dbReference type="GO" id="GO:0005634">
    <property type="term" value="C:nucleus"/>
    <property type="evidence" value="ECO:0000314"/>
    <property type="project" value="TAIR"/>
</dbReference>
<dbReference type="CDD" id="cd22157">
    <property type="entry name" value="F-box_AtFBW1-like"/>
    <property type="match status" value="1"/>
</dbReference>
<dbReference type="Gene3D" id="1.20.1280.50">
    <property type="match status" value="1"/>
</dbReference>
<dbReference type="InterPro" id="IPR013187">
    <property type="entry name" value="F-box-assoc_dom_typ3"/>
</dbReference>
<dbReference type="InterPro" id="IPR017451">
    <property type="entry name" value="F-box-assoc_interact_dom"/>
</dbReference>
<dbReference type="InterPro" id="IPR036047">
    <property type="entry name" value="F-box-like_dom_sf"/>
</dbReference>
<dbReference type="InterPro" id="IPR001810">
    <property type="entry name" value="F-box_dom"/>
</dbReference>
<dbReference type="NCBIfam" id="TIGR01640">
    <property type="entry name" value="F_box_assoc_1"/>
    <property type="match status" value="1"/>
</dbReference>
<dbReference type="PANTHER" id="PTHR31111">
    <property type="entry name" value="BNAA05G37150D PROTEIN-RELATED"/>
    <property type="match status" value="1"/>
</dbReference>
<dbReference type="PANTHER" id="PTHR31111:SF42">
    <property type="entry name" value="F-BOX DOMAIN-CONTAINING PROTEIN"/>
    <property type="match status" value="1"/>
</dbReference>
<dbReference type="Pfam" id="PF00646">
    <property type="entry name" value="F-box"/>
    <property type="match status" value="1"/>
</dbReference>
<dbReference type="Pfam" id="PF08268">
    <property type="entry name" value="FBA_3"/>
    <property type="match status" value="1"/>
</dbReference>
<dbReference type="SMART" id="SM00256">
    <property type="entry name" value="FBOX"/>
    <property type="match status" value="1"/>
</dbReference>
<dbReference type="SUPFAM" id="SSF81383">
    <property type="entry name" value="F-box domain"/>
    <property type="match status" value="1"/>
</dbReference>
<dbReference type="PROSITE" id="PS50181">
    <property type="entry name" value="FBOX"/>
    <property type="match status" value="1"/>
</dbReference>
<keyword id="KW-1185">Reference proteome</keyword>
<proteinExistence type="predicted"/>
<evidence type="ECO:0000255" key="1">
    <source>
        <dbReference type="PROSITE-ProRule" id="PRU00080"/>
    </source>
</evidence>
<evidence type="ECO:0000256" key="2">
    <source>
        <dbReference type="SAM" id="MobiDB-lite"/>
    </source>
</evidence>
<sequence>MEQREEKTENIQRKRSRGKSSSSSLPLDLTSEIFSRLPAKSVVRFRCVSKLWSSITTAPYFTNSFETRPNLMFFFKEGDKFFVFTIPQHNQNPNESYSYSSSEIIDSYHTTYPKRCCVTTLTESVHGLICFRKAATPIIWNPTMRKFKPLRKLDERWKNIKVSLGYDPVDGKHKVVCMPYGNAFYECRVLTLGSDQEWRTVKTNHKNSPFTFHGGVCYRQSRCINGVIYYRADTNSGRVILSFDVRSERFDVIELPWDENFGLVMMMSYKGRLACLGFNHEKNSRSMWVLENVEQREWSCHTYLPISHYEPGLENYFNLTGITNDGELIYVPNTVLERFHVIYFDAIRETFRRVIYKGVADKGFRLRNGLEDKPIRRLHFFPNHIETLMSL</sequence>